<accession>Q8XVI8</accession>
<comment type="function">
    <text evidence="1">Cell wall formation.</text>
</comment>
<comment type="catalytic activity">
    <reaction evidence="1">
        <text>UDP-N-acetyl-alpha-D-muramate + L-alanine + ATP = UDP-N-acetyl-alpha-D-muramoyl-L-alanine + ADP + phosphate + H(+)</text>
        <dbReference type="Rhea" id="RHEA:23372"/>
        <dbReference type="ChEBI" id="CHEBI:15378"/>
        <dbReference type="ChEBI" id="CHEBI:30616"/>
        <dbReference type="ChEBI" id="CHEBI:43474"/>
        <dbReference type="ChEBI" id="CHEBI:57972"/>
        <dbReference type="ChEBI" id="CHEBI:70757"/>
        <dbReference type="ChEBI" id="CHEBI:83898"/>
        <dbReference type="ChEBI" id="CHEBI:456216"/>
        <dbReference type="EC" id="6.3.2.8"/>
    </reaction>
</comment>
<comment type="pathway">
    <text evidence="1">Cell wall biogenesis; peptidoglycan biosynthesis.</text>
</comment>
<comment type="subcellular location">
    <subcellularLocation>
        <location evidence="1">Cytoplasm</location>
    </subcellularLocation>
</comment>
<comment type="similarity">
    <text evidence="1">Belongs to the MurCDEF family.</text>
</comment>
<reference key="1">
    <citation type="journal article" date="2002" name="Nature">
        <title>Genome sequence of the plant pathogen Ralstonia solanacearum.</title>
        <authorList>
            <person name="Salanoubat M."/>
            <person name="Genin S."/>
            <person name="Artiguenave F."/>
            <person name="Gouzy J."/>
            <person name="Mangenot S."/>
            <person name="Arlat M."/>
            <person name="Billault A."/>
            <person name="Brottier P."/>
            <person name="Camus J.-C."/>
            <person name="Cattolico L."/>
            <person name="Chandler M."/>
            <person name="Choisne N."/>
            <person name="Claudel-Renard C."/>
            <person name="Cunnac S."/>
            <person name="Demange N."/>
            <person name="Gaspin C."/>
            <person name="Lavie M."/>
            <person name="Moisan A."/>
            <person name="Robert C."/>
            <person name="Saurin W."/>
            <person name="Schiex T."/>
            <person name="Siguier P."/>
            <person name="Thebault P."/>
            <person name="Whalen M."/>
            <person name="Wincker P."/>
            <person name="Levy M."/>
            <person name="Weissenbach J."/>
            <person name="Boucher C.A."/>
        </authorList>
    </citation>
    <scope>NUCLEOTIDE SEQUENCE [LARGE SCALE GENOMIC DNA]</scope>
    <source>
        <strain>ATCC BAA-1114 / GMI1000</strain>
    </source>
</reference>
<dbReference type="EC" id="6.3.2.8" evidence="1"/>
<dbReference type="EMBL" id="AL646052">
    <property type="protein sequence ID" value="CAD16550.1"/>
    <property type="molecule type" value="Genomic_DNA"/>
</dbReference>
<dbReference type="RefSeq" id="WP_011002749.1">
    <property type="nucleotide sequence ID" value="NC_003295.1"/>
</dbReference>
<dbReference type="SMR" id="Q8XVI8"/>
<dbReference type="STRING" id="267608.RSc2843"/>
<dbReference type="EnsemblBacteria" id="CAD16550">
    <property type="protein sequence ID" value="CAD16550"/>
    <property type="gene ID" value="RSc2843"/>
</dbReference>
<dbReference type="KEGG" id="rso:RSc2843"/>
<dbReference type="eggNOG" id="COG0773">
    <property type="taxonomic scope" value="Bacteria"/>
</dbReference>
<dbReference type="HOGENOM" id="CLU_028104_2_2_4"/>
<dbReference type="UniPathway" id="UPA00219"/>
<dbReference type="Proteomes" id="UP000001436">
    <property type="component" value="Chromosome"/>
</dbReference>
<dbReference type="GO" id="GO:0005737">
    <property type="term" value="C:cytoplasm"/>
    <property type="evidence" value="ECO:0007669"/>
    <property type="project" value="UniProtKB-SubCell"/>
</dbReference>
<dbReference type="GO" id="GO:0005524">
    <property type="term" value="F:ATP binding"/>
    <property type="evidence" value="ECO:0007669"/>
    <property type="project" value="UniProtKB-UniRule"/>
</dbReference>
<dbReference type="GO" id="GO:0008763">
    <property type="term" value="F:UDP-N-acetylmuramate-L-alanine ligase activity"/>
    <property type="evidence" value="ECO:0007669"/>
    <property type="project" value="UniProtKB-UniRule"/>
</dbReference>
<dbReference type="GO" id="GO:0051301">
    <property type="term" value="P:cell division"/>
    <property type="evidence" value="ECO:0007669"/>
    <property type="project" value="UniProtKB-KW"/>
</dbReference>
<dbReference type="GO" id="GO:0071555">
    <property type="term" value="P:cell wall organization"/>
    <property type="evidence" value="ECO:0007669"/>
    <property type="project" value="UniProtKB-KW"/>
</dbReference>
<dbReference type="GO" id="GO:0009252">
    <property type="term" value="P:peptidoglycan biosynthetic process"/>
    <property type="evidence" value="ECO:0007669"/>
    <property type="project" value="UniProtKB-UniRule"/>
</dbReference>
<dbReference type="GO" id="GO:0008360">
    <property type="term" value="P:regulation of cell shape"/>
    <property type="evidence" value="ECO:0007669"/>
    <property type="project" value="UniProtKB-KW"/>
</dbReference>
<dbReference type="FunFam" id="3.40.1190.10:FF:000001">
    <property type="entry name" value="UDP-N-acetylmuramate--L-alanine ligase"/>
    <property type="match status" value="1"/>
</dbReference>
<dbReference type="Gene3D" id="3.90.190.20">
    <property type="entry name" value="Mur ligase, C-terminal domain"/>
    <property type="match status" value="1"/>
</dbReference>
<dbReference type="Gene3D" id="3.40.1190.10">
    <property type="entry name" value="Mur-like, catalytic domain"/>
    <property type="match status" value="1"/>
</dbReference>
<dbReference type="Gene3D" id="3.40.50.720">
    <property type="entry name" value="NAD(P)-binding Rossmann-like Domain"/>
    <property type="match status" value="1"/>
</dbReference>
<dbReference type="HAMAP" id="MF_00046">
    <property type="entry name" value="MurC"/>
    <property type="match status" value="1"/>
</dbReference>
<dbReference type="InterPro" id="IPR036565">
    <property type="entry name" value="Mur-like_cat_sf"/>
</dbReference>
<dbReference type="InterPro" id="IPR004101">
    <property type="entry name" value="Mur_ligase_C"/>
</dbReference>
<dbReference type="InterPro" id="IPR036615">
    <property type="entry name" value="Mur_ligase_C_dom_sf"/>
</dbReference>
<dbReference type="InterPro" id="IPR013221">
    <property type="entry name" value="Mur_ligase_cen"/>
</dbReference>
<dbReference type="InterPro" id="IPR000713">
    <property type="entry name" value="Mur_ligase_N"/>
</dbReference>
<dbReference type="InterPro" id="IPR050061">
    <property type="entry name" value="MurCDEF_pg_biosynth"/>
</dbReference>
<dbReference type="InterPro" id="IPR005758">
    <property type="entry name" value="UDP-N-AcMur_Ala_ligase_MurC"/>
</dbReference>
<dbReference type="NCBIfam" id="TIGR01082">
    <property type="entry name" value="murC"/>
    <property type="match status" value="1"/>
</dbReference>
<dbReference type="PANTHER" id="PTHR43445:SF3">
    <property type="entry name" value="UDP-N-ACETYLMURAMATE--L-ALANINE LIGASE"/>
    <property type="match status" value="1"/>
</dbReference>
<dbReference type="PANTHER" id="PTHR43445">
    <property type="entry name" value="UDP-N-ACETYLMURAMATE--L-ALANINE LIGASE-RELATED"/>
    <property type="match status" value="1"/>
</dbReference>
<dbReference type="Pfam" id="PF01225">
    <property type="entry name" value="Mur_ligase"/>
    <property type="match status" value="1"/>
</dbReference>
<dbReference type="Pfam" id="PF02875">
    <property type="entry name" value="Mur_ligase_C"/>
    <property type="match status" value="1"/>
</dbReference>
<dbReference type="Pfam" id="PF08245">
    <property type="entry name" value="Mur_ligase_M"/>
    <property type="match status" value="1"/>
</dbReference>
<dbReference type="SUPFAM" id="SSF51984">
    <property type="entry name" value="MurCD N-terminal domain"/>
    <property type="match status" value="1"/>
</dbReference>
<dbReference type="SUPFAM" id="SSF53623">
    <property type="entry name" value="MurD-like peptide ligases, catalytic domain"/>
    <property type="match status" value="1"/>
</dbReference>
<dbReference type="SUPFAM" id="SSF53244">
    <property type="entry name" value="MurD-like peptide ligases, peptide-binding domain"/>
    <property type="match status" value="1"/>
</dbReference>
<name>MURC_RALN1</name>
<organism>
    <name type="scientific">Ralstonia nicotianae (strain ATCC BAA-1114 / GMI1000)</name>
    <name type="common">Ralstonia solanacearum</name>
    <dbReference type="NCBI Taxonomy" id="267608"/>
    <lineage>
        <taxon>Bacteria</taxon>
        <taxon>Pseudomonadati</taxon>
        <taxon>Pseudomonadota</taxon>
        <taxon>Betaproteobacteria</taxon>
        <taxon>Burkholderiales</taxon>
        <taxon>Burkholderiaceae</taxon>
        <taxon>Ralstonia</taxon>
        <taxon>Ralstonia solanacearum species complex</taxon>
    </lineage>
</organism>
<gene>
    <name evidence="1" type="primary">murC</name>
    <name type="ordered locus">RSc2843</name>
    <name type="ORF">RS00262</name>
</gene>
<feature type="chain" id="PRO_0000182138" description="UDP-N-acetylmuramate--L-alanine ligase">
    <location>
        <begin position="1"/>
        <end position="483"/>
    </location>
</feature>
<feature type="binding site" evidence="1">
    <location>
        <begin position="112"/>
        <end position="118"/>
    </location>
    <ligand>
        <name>ATP</name>
        <dbReference type="ChEBI" id="CHEBI:30616"/>
    </ligand>
</feature>
<proteinExistence type="inferred from homology"/>
<evidence type="ECO:0000255" key="1">
    <source>
        <dbReference type="HAMAP-Rule" id="MF_00046"/>
    </source>
</evidence>
<protein>
    <recommendedName>
        <fullName evidence="1">UDP-N-acetylmuramate--L-alanine ligase</fullName>
        <ecNumber evidence="1">6.3.2.8</ecNumber>
    </recommendedName>
    <alternativeName>
        <fullName evidence="1">UDP-N-acetylmuramoyl-L-alanine synthetase</fullName>
    </alternativeName>
</protein>
<sequence length="483" mass="51201">MKHIVKNIHFVGIGGAGMSGIAEVLLNLGYRVTGSDLGQSAATQRLTALGATVMQGHAPEHVVGANAVVVSTAVRGDNPEVLAARAKRIPIVPRAVMLAELMRLKQGIAIAGTHGKTTTTSLVASVLAEGGLDPTFVIGGRLNSAGANARLGTGDFIVAEADESDASFLNLFPVIEVITNIDADHMDTYGHDFARLKQAFIEFTHRLPFYGIAVLCVDDPNVREILPFVSKPVVRYGFAEDAQVRAVNARAVDGRMEFTVIRQLNGHAEPPLSITLNLPGMHNVQNALAAIAIATELEVPDEAIVKALAEFNGVGRRFQRYGEVPTADGQGRFTLIDDYGHHPVEMAATLAAARGAFPGRRLVLAFQPHRFTRTRDCFEDFIKVLGTVDALLLAEVYAAGEPPIVAADGRALTRALRVAGKIEPVFVEQIEDMPQAILDAAQDNDVVITMGAGSIGQVPGQVVARQAEVRAANVVDLNGGAAA</sequence>
<keyword id="KW-0067">ATP-binding</keyword>
<keyword id="KW-0131">Cell cycle</keyword>
<keyword id="KW-0132">Cell division</keyword>
<keyword id="KW-0133">Cell shape</keyword>
<keyword id="KW-0961">Cell wall biogenesis/degradation</keyword>
<keyword id="KW-0963">Cytoplasm</keyword>
<keyword id="KW-0436">Ligase</keyword>
<keyword id="KW-0547">Nucleotide-binding</keyword>
<keyword id="KW-0573">Peptidoglycan synthesis</keyword>
<keyword id="KW-1185">Reference proteome</keyword>